<accession>Q5GWT9</accession>
<keyword id="KW-1185">Reference proteome</keyword>
<keyword id="KW-0687">Ribonucleoprotein</keyword>
<keyword id="KW-0689">Ribosomal protein</keyword>
<keyword id="KW-0694">RNA-binding</keyword>
<keyword id="KW-0699">rRNA-binding</keyword>
<evidence type="ECO:0000255" key="1">
    <source>
        <dbReference type="HAMAP-Rule" id="MF_01331"/>
    </source>
</evidence>
<evidence type="ECO:0000305" key="2"/>
<gene>
    <name evidence="1" type="primary">rplV</name>
    <name type="ordered locus">XOO3578</name>
</gene>
<organism>
    <name type="scientific">Xanthomonas oryzae pv. oryzae (strain KACC10331 / KXO85)</name>
    <dbReference type="NCBI Taxonomy" id="291331"/>
    <lineage>
        <taxon>Bacteria</taxon>
        <taxon>Pseudomonadati</taxon>
        <taxon>Pseudomonadota</taxon>
        <taxon>Gammaproteobacteria</taxon>
        <taxon>Lysobacterales</taxon>
        <taxon>Lysobacteraceae</taxon>
        <taxon>Xanthomonas</taxon>
    </lineage>
</organism>
<dbReference type="EMBL" id="AE013598">
    <property type="protein sequence ID" value="AAW76832.1"/>
    <property type="molecule type" value="Genomic_DNA"/>
</dbReference>
<dbReference type="SMR" id="Q5GWT9"/>
<dbReference type="STRING" id="291331.XOO3578"/>
<dbReference type="KEGG" id="xoo:XOO3578"/>
<dbReference type="HOGENOM" id="CLU_083987_3_3_6"/>
<dbReference type="Proteomes" id="UP000006735">
    <property type="component" value="Chromosome"/>
</dbReference>
<dbReference type="GO" id="GO:0022625">
    <property type="term" value="C:cytosolic large ribosomal subunit"/>
    <property type="evidence" value="ECO:0007669"/>
    <property type="project" value="TreeGrafter"/>
</dbReference>
<dbReference type="GO" id="GO:0019843">
    <property type="term" value="F:rRNA binding"/>
    <property type="evidence" value="ECO:0007669"/>
    <property type="project" value="UniProtKB-UniRule"/>
</dbReference>
<dbReference type="GO" id="GO:0003735">
    <property type="term" value="F:structural constituent of ribosome"/>
    <property type="evidence" value="ECO:0007669"/>
    <property type="project" value="InterPro"/>
</dbReference>
<dbReference type="GO" id="GO:0006412">
    <property type="term" value="P:translation"/>
    <property type="evidence" value="ECO:0007669"/>
    <property type="project" value="UniProtKB-UniRule"/>
</dbReference>
<dbReference type="CDD" id="cd00336">
    <property type="entry name" value="Ribosomal_L22"/>
    <property type="match status" value="1"/>
</dbReference>
<dbReference type="FunFam" id="3.90.470.10:FF:000001">
    <property type="entry name" value="50S ribosomal protein L22"/>
    <property type="match status" value="1"/>
</dbReference>
<dbReference type="Gene3D" id="3.90.470.10">
    <property type="entry name" value="Ribosomal protein L22/L17"/>
    <property type="match status" value="1"/>
</dbReference>
<dbReference type="HAMAP" id="MF_01331_B">
    <property type="entry name" value="Ribosomal_uL22_B"/>
    <property type="match status" value="1"/>
</dbReference>
<dbReference type="InterPro" id="IPR001063">
    <property type="entry name" value="Ribosomal_uL22"/>
</dbReference>
<dbReference type="InterPro" id="IPR005727">
    <property type="entry name" value="Ribosomal_uL22_bac/chlpt-type"/>
</dbReference>
<dbReference type="InterPro" id="IPR047867">
    <property type="entry name" value="Ribosomal_uL22_bac/org-type"/>
</dbReference>
<dbReference type="InterPro" id="IPR018260">
    <property type="entry name" value="Ribosomal_uL22_CS"/>
</dbReference>
<dbReference type="InterPro" id="IPR036394">
    <property type="entry name" value="Ribosomal_uL22_sf"/>
</dbReference>
<dbReference type="NCBIfam" id="TIGR01044">
    <property type="entry name" value="rplV_bact"/>
    <property type="match status" value="1"/>
</dbReference>
<dbReference type="PANTHER" id="PTHR13501">
    <property type="entry name" value="CHLOROPLAST 50S RIBOSOMAL PROTEIN L22-RELATED"/>
    <property type="match status" value="1"/>
</dbReference>
<dbReference type="PANTHER" id="PTHR13501:SF8">
    <property type="entry name" value="LARGE RIBOSOMAL SUBUNIT PROTEIN UL22M"/>
    <property type="match status" value="1"/>
</dbReference>
<dbReference type="Pfam" id="PF00237">
    <property type="entry name" value="Ribosomal_L22"/>
    <property type="match status" value="1"/>
</dbReference>
<dbReference type="SUPFAM" id="SSF54843">
    <property type="entry name" value="Ribosomal protein L22"/>
    <property type="match status" value="1"/>
</dbReference>
<dbReference type="PROSITE" id="PS00464">
    <property type="entry name" value="RIBOSOMAL_L22"/>
    <property type="match status" value="1"/>
</dbReference>
<sequence>MTMEAKAILRTARISPQKARLVADQVRGLSAERAVNLLKFSDKKAAHLIKKVVESAIANAENNQGADVDELKVKTIMVDEGPSLKRFMARAKGRGTRILKRTSHITVIVGAAK</sequence>
<proteinExistence type="inferred from homology"/>
<name>RL22_XANOR</name>
<feature type="chain" id="PRO_0000243230" description="Large ribosomal subunit protein uL22">
    <location>
        <begin position="1"/>
        <end position="113"/>
    </location>
</feature>
<protein>
    <recommendedName>
        <fullName evidence="1">Large ribosomal subunit protein uL22</fullName>
    </recommendedName>
    <alternativeName>
        <fullName evidence="2">50S ribosomal protein L22</fullName>
    </alternativeName>
</protein>
<reference key="1">
    <citation type="journal article" date="2005" name="Nucleic Acids Res.">
        <title>The genome sequence of Xanthomonas oryzae pathovar oryzae KACC10331, the bacterial blight pathogen of rice.</title>
        <authorList>
            <person name="Lee B.-M."/>
            <person name="Park Y.-J."/>
            <person name="Park D.-S."/>
            <person name="Kang H.-W."/>
            <person name="Kim J.-G."/>
            <person name="Song E.-S."/>
            <person name="Park I.-C."/>
            <person name="Yoon U.-H."/>
            <person name="Hahn J.-H."/>
            <person name="Koo B.-S."/>
            <person name="Lee G.-B."/>
            <person name="Kim H."/>
            <person name="Park H.-S."/>
            <person name="Yoon K.-O."/>
            <person name="Kim J.-H."/>
            <person name="Jung C.-H."/>
            <person name="Koh N.-H."/>
            <person name="Seo J.-S."/>
            <person name="Go S.-J."/>
        </authorList>
    </citation>
    <scope>NUCLEOTIDE SEQUENCE [LARGE SCALE GENOMIC DNA]</scope>
    <source>
        <strain>KACC10331 / KXO85</strain>
    </source>
</reference>
<comment type="function">
    <text evidence="1">This protein binds specifically to 23S rRNA; its binding is stimulated by other ribosomal proteins, e.g. L4, L17, and L20. It is important during the early stages of 50S assembly. It makes multiple contacts with different domains of the 23S rRNA in the assembled 50S subunit and ribosome (By similarity).</text>
</comment>
<comment type="function">
    <text evidence="1">The globular domain of the protein is located near the polypeptide exit tunnel on the outside of the subunit, while an extended beta-hairpin is found that lines the wall of the exit tunnel in the center of the 70S ribosome.</text>
</comment>
<comment type="subunit">
    <text evidence="1">Part of the 50S ribosomal subunit.</text>
</comment>
<comment type="similarity">
    <text evidence="1">Belongs to the universal ribosomal protein uL22 family.</text>
</comment>